<feature type="chain" id="PRO_0000232429" description="Protein NDRG2">
    <location>
        <begin position="1"/>
        <end position="360"/>
    </location>
</feature>
<feature type="region of interest" description="Disordered" evidence="3">
    <location>
        <begin position="325"/>
        <end position="360"/>
    </location>
</feature>
<protein>
    <recommendedName>
        <fullName>Protein NDRG2</fullName>
    </recommendedName>
</protein>
<gene>
    <name evidence="4" type="primary">ndrg2</name>
</gene>
<sequence length="360" mass="39344">MSELQEVQITEDNPLLQDPLKAAELAAKLLQVQEQKHSIETPYGVVTVTIQGTPKPKRPAIVTFHDVGMDHKMCFDTLFKYEDMCEIVKNFVVCHIDAPGQEEGSAVYPPGYQYPSLDQLAETIPCVLQYLNFPSIIGIGVGAGAYIFAKYTLSHANTVEGLVLINIDPNAKGWMDWAAQKLTGLTQSISDMMLGHLFSAEELSGNSDVVRQYKASILNSPLISNYQLYWNSYNSRRDLNLERGGGVTLKCPVMLVVGDQAPHEDAVVECNSKLDPTQTSFLKMADSGGQPQITQPGKLTEAFKYFVQGMGYMASSCMTRLSRSRTASLSSEGNRSRSRTLSQSSESGGGPPAPLAEVTC</sequence>
<evidence type="ECO:0000250" key="1"/>
<evidence type="ECO:0000255" key="2"/>
<evidence type="ECO:0000256" key="3">
    <source>
        <dbReference type="SAM" id="MobiDB-lite"/>
    </source>
</evidence>
<evidence type="ECO:0000312" key="4">
    <source>
        <dbReference type="EMBL" id="AAH80333.1"/>
    </source>
</evidence>
<dbReference type="EMBL" id="BC080333">
    <property type="protein sequence ID" value="AAH80333.1"/>
    <property type="molecule type" value="mRNA"/>
</dbReference>
<dbReference type="RefSeq" id="NP_001007898.1">
    <property type="nucleotide sequence ID" value="NM_001007897.1"/>
</dbReference>
<dbReference type="SMR" id="Q66KM2"/>
<dbReference type="FunCoup" id="Q66KM2">
    <property type="interactions" value="952"/>
</dbReference>
<dbReference type="ESTHER" id="xentr-ndrg2">
    <property type="family name" value="Ndr_family"/>
</dbReference>
<dbReference type="MEROPS" id="S33.989"/>
<dbReference type="PaxDb" id="8364-ENSXETP00000035239"/>
<dbReference type="DNASU" id="493281"/>
<dbReference type="GeneID" id="493281"/>
<dbReference type="KEGG" id="xtr:493281"/>
<dbReference type="AGR" id="Xenbase:XB-GENE-951910"/>
<dbReference type="CTD" id="57447"/>
<dbReference type="Xenbase" id="XB-GENE-951910">
    <property type="gene designation" value="ndrg2"/>
</dbReference>
<dbReference type="eggNOG" id="KOG2931">
    <property type="taxonomic scope" value="Eukaryota"/>
</dbReference>
<dbReference type="HOGENOM" id="CLU_035361_1_0_1"/>
<dbReference type="InParanoid" id="Q66KM2"/>
<dbReference type="OrthoDB" id="191979at2759"/>
<dbReference type="Proteomes" id="UP000008143">
    <property type="component" value="Chromosome 1"/>
</dbReference>
<dbReference type="ExpressionAtlas" id="Q66KM2">
    <property type="expression patterns" value="baseline"/>
</dbReference>
<dbReference type="GO" id="GO:0005737">
    <property type="term" value="C:cytoplasm"/>
    <property type="evidence" value="ECO:0007669"/>
    <property type="project" value="UniProtKB-SubCell"/>
</dbReference>
<dbReference type="GO" id="GO:0030154">
    <property type="term" value="P:cell differentiation"/>
    <property type="evidence" value="ECO:0007669"/>
    <property type="project" value="UniProtKB-KW"/>
</dbReference>
<dbReference type="GO" id="GO:0007399">
    <property type="term" value="P:nervous system development"/>
    <property type="evidence" value="ECO:0007669"/>
    <property type="project" value="UniProtKB-KW"/>
</dbReference>
<dbReference type="GO" id="GO:0016055">
    <property type="term" value="P:Wnt signaling pathway"/>
    <property type="evidence" value="ECO:0007669"/>
    <property type="project" value="UniProtKB-KW"/>
</dbReference>
<dbReference type="FunFam" id="3.40.50.1820:FF:000034">
    <property type="entry name" value="NDRG2 isoform 1"/>
    <property type="match status" value="1"/>
</dbReference>
<dbReference type="Gene3D" id="3.40.50.1820">
    <property type="entry name" value="alpha/beta hydrolase"/>
    <property type="match status" value="1"/>
</dbReference>
<dbReference type="InterPro" id="IPR029058">
    <property type="entry name" value="AB_hydrolase_fold"/>
</dbReference>
<dbReference type="InterPro" id="IPR004142">
    <property type="entry name" value="NDRG"/>
</dbReference>
<dbReference type="PANTHER" id="PTHR11034">
    <property type="entry name" value="N-MYC DOWNSTREAM REGULATED"/>
    <property type="match status" value="1"/>
</dbReference>
<dbReference type="Pfam" id="PF03096">
    <property type="entry name" value="Ndr"/>
    <property type="match status" value="1"/>
</dbReference>
<dbReference type="SUPFAM" id="SSF53474">
    <property type="entry name" value="alpha/beta-Hydrolases"/>
    <property type="match status" value="1"/>
</dbReference>
<keyword id="KW-0963">Cytoplasm</keyword>
<keyword id="KW-0217">Developmental protein</keyword>
<keyword id="KW-0221">Differentiation</keyword>
<keyword id="KW-0524">Neurogenesis</keyword>
<keyword id="KW-1185">Reference proteome</keyword>
<keyword id="KW-0879">Wnt signaling pathway</keyword>
<proteinExistence type="evidence at transcript level"/>
<organism>
    <name type="scientific">Xenopus tropicalis</name>
    <name type="common">Western clawed frog</name>
    <name type="synonym">Silurana tropicalis</name>
    <dbReference type="NCBI Taxonomy" id="8364"/>
    <lineage>
        <taxon>Eukaryota</taxon>
        <taxon>Metazoa</taxon>
        <taxon>Chordata</taxon>
        <taxon>Craniata</taxon>
        <taxon>Vertebrata</taxon>
        <taxon>Euteleostomi</taxon>
        <taxon>Amphibia</taxon>
        <taxon>Batrachia</taxon>
        <taxon>Anura</taxon>
        <taxon>Pipoidea</taxon>
        <taxon>Pipidae</taxon>
        <taxon>Xenopodinae</taxon>
        <taxon>Xenopus</taxon>
        <taxon>Silurana</taxon>
    </lineage>
</organism>
<accession>Q66KM2</accession>
<comment type="function">
    <text evidence="1">Contributes to the regulation of the Wnt signaling pathway. Down-regulates CTNNB1-mediated transcriptional activation of target genes. May be involved in neuron differentiation (By similarity).</text>
</comment>
<comment type="subcellular location">
    <subcellularLocation>
        <location evidence="1">Cytoplasm</location>
    </subcellularLocation>
</comment>
<comment type="similarity">
    <text evidence="2">Belongs to the NDRG family.</text>
</comment>
<reference evidence="4" key="1">
    <citation type="submission" date="2004-08" db="EMBL/GenBank/DDBJ databases">
        <authorList>
            <consortium name="NIH - Xenopus Gene Collection (XGC) project"/>
        </authorList>
    </citation>
    <scope>NUCLEOTIDE SEQUENCE [LARGE SCALE MRNA]</scope>
    <source>
        <tissue evidence="4">Embryo</tissue>
    </source>
</reference>
<name>NDRG2_XENTR</name>